<reference key="1">
    <citation type="journal article" date="2004" name="Science">
        <title>The Ashbya gossypii genome as a tool for mapping the ancient Saccharomyces cerevisiae genome.</title>
        <authorList>
            <person name="Dietrich F.S."/>
            <person name="Voegeli S."/>
            <person name="Brachat S."/>
            <person name="Lerch A."/>
            <person name="Gates K."/>
            <person name="Steiner S."/>
            <person name="Mohr C."/>
            <person name="Poehlmann R."/>
            <person name="Luedi P."/>
            <person name="Choi S."/>
            <person name="Wing R.A."/>
            <person name="Flavier A."/>
            <person name="Gaffney T.D."/>
            <person name="Philippsen P."/>
        </authorList>
    </citation>
    <scope>NUCLEOTIDE SEQUENCE [LARGE SCALE GENOMIC DNA]</scope>
    <source>
        <strain>ATCC 10895 / CBS 109.51 / FGSC 9923 / NRRL Y-1056</strain>
    </source>
</reference>
<reference key="2">
    <citation type="journal article" date="2013" name="G3 (Bethesda)">
        <title>Genomes of Ashbya fungi isolated from insects reveal four mating-type loci, numerous translocations, lack of transposons, and distinct gene duplications.</title>
        <authorList>
            <person name="Dietrich F.S."/>
            <person name="Voegeli S."/>
            <person name="Kuo S."/>
            <person name="Philippsen P."/>
        </authorList>
    </citation>
    <scope>GENOME REANNOTATION</scope>
    <scope>SEQUENCE REVISION TO 81</scope>
    <source>
        <strain>ATCC 10895 / CBS 109.51 / FGSC 9923 / NRRL Y-1056</strain>
    </source>
</reference>
<gene>
    <name type="primary">BST1</name>
    <name type="ordered locus">AFR521W</name>
</gene>
<feature type="chain" id="PRO_0000277628" description="GPI inositol-deacylase">
    <location>
        <begin position="1"/>
        <end position="1028"/>
    </location>
</feature>
<feature type="transmembrane region" description="Helical" evidence="2">
    <location>
        <begin position="51"/>
        <end position="71"/>
    </location>
</feature>
<feature type="transmembrane region" description="Helical" evidence="2">
    <location>
        <begin position="699"/>
        <end position="719"/>
    </location>
</feature>
<feature type="transmembrane region" description="Helical" evidence="2">
    <location>
        <begin position="740"/>
        <end position="760"/>
    </location>
</feature>
<feature type="transmembrane region" description="Helical" evidence="2">
    <location>
        <begin position="799"/>
        <end position="819"/>
    </location>
</feature>
<feature type="transmembrane region" description="Helical" evidence="2">
    <location>
        <begin position="867"/>
        <end position="887"/>
    </location>
</feature>
<feature type="transmembrane region" description="Helical" evidence="2">
    <location>
        <begin position="915"/>
        <end position="935"/>
    </location>
</feature>
<feature type="transmembrane region" description="Helical" evidence="2">
    <location>
        <begin position="948"/>
        <end position="968"/>
    </location>
</feature>
<feature type="transmembrane region" description="Helical" evidence="2">
    <location>
        <begin position="979"/>
        <end position="999"/>
    </location>
</feature>
<feature type="transmembrane region" description="Helical" evidence="2">
    <location>
        <begin position="1002"/>
        <end position="1022"/>
    </location>
</feature>
<feature type="active site" evidence="1">
    <location>
        <position position="231"/>
    </location>
</feature>
<feature type="glycosylation site" description="N-linked (GlcNAc...) asparagine" evidence="2">
    <location>
        <position position="166"/>
    </location>
</feature>
<feature type="glycosylation site" description="N-linked (GlcNAc...) asparagine" evidence="2">
    <location>
        <position position="299"/>
    </location>
</feature>
<feature type="glycosylation site" description="N-linked (GlcNAc...) asparagine" evidence="2">
    <location>
        <position position="530"/>
    </location>
</feature>
<feature type="glycosylation site" description="N-linked (GlcNAc...) asparagine" evidence="2">
    <location>
        <position position="586"/>
    </location>
</feature>
<feature type="glycosylation site" description="N-linked (GlcNAc...) asparagine" evidence="2">
    <location>
        <position position="679"/>
    </location>
</feature>
<protein>
    <recommendedName>
        <fullName>GPI inositol-deacylase</fullName>
        <ecNumber>3.1.-.-</ecNumber>
    </recommendedName>
</protein>
<sequence>MCSVLRFQRNMASWVKRHVFTFDLGDIQEKRGSDSGSGQSRSTADRYFNAVFGLGLLLFCIVCMAYLSPFLGSDLPQCRSVTMYPSYALVQGFDRRFSRLGRKYHLYLYREAGKDNGFSDDNEIHLDGIPVLFIPGNAGTYKQVRSIAAATANLYYGEMRDALNNNNTKNLDFFTADFNEDFTAFHGRTMLDQAEYCNDAIRYILSIYELSDKYRASGEPLPTSVLVVGHSMGGIVARVMTTLKNHIPQSINTILTLSSPHSTAPATFDGDILKIYNAMNAFWESKFRDRDKDPFYAENVSVISITGGVLDSVLPADYTSLEGIIPSDNGFTTYTTTIPWVWTPIDHLAIVWCDQLRIVVAKLLLELVDRTSASKTRPLPDRMRLARRSLLSGLESSASADFHLWDNEDYIFQPKVAPGALTTAQEMSPILLNVETYDTLNEYNYLAIPHNEPNLRFSLLTSLENLEELHILFCQNYNEHNSNGPIEYSSRCVSPSQDFIHVPRSFENSKYPSESSVGSASLPFKALHFNQTLLSKYDFIKFRKPSKSSFKDEDFVLVELSTTDWQTTVNCNPFQLLLSSAKFAHNASSAPFIQTFRFPYLSSSLVSYKLDVSYTGENLVFEPFIAQSIDSPFETKWHLRLRDSVTITIHSEAPFIPFESHYDKSVKLRLIAPPDCNINLSLSINWYMTLKFLFIRYRLAVAALPLSLVSFVLANQFALYYSSSFFPDFSTTLRAVTSKFWLKLTLSSILLTPILNISFIQRLIHSLDPSGVNSPFLIRKKNIMTAAYYLGIREIFMCWIGPLLSCITLSLVYMLAFGISTLESCVRRVSCYMSTAISKTRMKEIWLKDECEYEEGLVLRRRIGSGIMILAVVLYVPYQLVFVLLFLVQLNTVIKLNINYFNTKRHSNLRNYNSSYLLLMLCVLPINAPMVFVFLHNFGRRWVTSFRSHHNCLAILPIILLVCDNAGLRIPRSHCIERISKLITIGSFLYLSLYSVIYGIRNLFWAHHLVNLISGWLLFTSLDLTSNN</sequence>
<dbReference type="EC" id="3.1.-.-"/>
<dbReference type="EMBL" id="AE016819">
    <property type="protein sequence ID" value="AAS53892.2"/>
    <property type="molecule type" value="Genomic_DNA"/>
</dbReference>
<dbReference type="RefSeq" id="NP_986068.2">
    <property type="nucleotide sequence ID" value="NM_212204.2"/>
</dbReference>
<dbReference type="SMR" id="Q752Q2"/>
<dbReference type="FunCoup" id="Q752Q2">
    <property type="interactions" value="57"/>
</dbReference>
<dbReference type="STRING" id="284811.Q752Q2"/>
<dbReference type="ESTHER" id="ashgo-BST1">
    <property type="family name" value="PGAP1"/>
</dbReference>
<dbReference type="GlyCosmos" id="Q752Q2">
    <property type="glycosylation" value="5 sites, No reported glycans"/>
</dbReference>
<dbReference type="EnsemblFungi" id="AAS53892">
    <property type="protein sequence ID" value="AAS53892"/>
    <property type="gene ID" value="AGOS_AFR521W"/>
</dbReference>
<dbReference type="GeneID" id="4622347"/>
<dbReference type="KEGG" id="ago:AGOS_AFR521W"/>
<dbReference type="eggNOG" id="KOG3724">
    <property type="taxonomic scope" value="Eukaryota"/>
</dbReference>
<dbReference type="HOGENOM" id="CLU_006103_0_0_1"/>
<dbReference type="InParanoid" id="Q752Q2"/>
<dbReference type="OMA" id="WVRNLAV"/>
<dbReference type="OrthoDB" id="348976at2759"/>
<dbReference type="Proteomes" id="UP000000591">
    <property type="component" value="Chromosome VI"/>
</dbReference>
<dbReference type="GO" id="GO:0005783">
    <property type="term" value="C:endoplasmic reticulum"/>
    <property type="evidence" value="ECO:0000318"/>
    <property type="project" value="GO_Central"/>
</dbReference>
<dbReference type="GO" id="GO:0005789">
    <property type="term" value="C:endoplasmic reticulum membrane"/>
    <property type="evidence" value="ECO:0007669"/>
    <property type="project" value="UniProtKB-SubCell"/>
</dbReference>
<dbReference type="GO" id="GO:0050185">
    <property type="term" value="F:phosphatidylinositol deacylase activity"/>
    <property type="evidence" value="ECO:0000318"/>
    <property type="project" value="GO_Central"/>
</dbReference>
<dbReference type="GO" id="GO:0006888">
    <property type="term" value="P:endoplasmic reticulum to Golgi vesicle-mediated transport"/>
    <property type="evidence" value="ECO:0007669"/>
    <property type="project" value="EnsemblFungi"/>
</dbReference>
<dbReference type="GO" id="GO:0036503">
    <property type="term" value="P:ERAD pathway"/>
    <property type="evidence" value="ECO:0007669"/>
    <property type="project" value="EnsemblFungi"/>
</dbReference>
<dbReference type="GO" id="GO:0006506">
    <property type="term" value="P:GPI anchor biosynthetic process"/>
    <property type="evidence" value="ECO:0000318"/>
    <property type="project" value="GO_Central"/>
</dbReference>
<dbReference type="GO" id="GO:0006621">
    <property type="term" value="P:protein retention in ER lumen"/>
    <property type="evidence" value="ECO:0007669"/>
    <property type="project" value="EnsemblFungi"/>
</dbReference>
<dbReference type="GO" id="GO:0015031">
    <property type="term" value="P:protein transport"/>
    <property type="evidence" value="ECO:0007669"/>
    <property type="project" value="UniProtKB-KW"/>
</dbReference>
<dbReference type="GO" id="GO:0034368">
    <property type="term" value="P:protein-lipid complex remodeling"/>
    <property type="evidence" value="ECO:0007669"/>
    <property type="project" value="EnsemblFungi"/>
</dbReference>
<dbReference type="GO" id="GO:0016050">
    <property type="term" value="P:vesicle organization"/>
    <property type="evidence" value="ECO:0007669"/>
    <property type="project" value="EnsemblFungi"/>
</dbReference>
<dbReference type="FunFam" id="3.40.50.1820:FF:000056">
    <property type="entry name" value="GPI inositol-deacylase"/>
    <property type="match status" value="1"/>
</dbReference>
<dbReference type="Gene3D" id="3.40.50.1820">
    <property type="entry name" value="alpha/beta hydrolase"/>
    <property type="match status" value="1"/>
</dbReference>
<dbReference type="InterPro" id="IPR029058">
    <property type="entry name" value="AB_hydrolase_fold"/>
</dbReference>
<dbReference type="InterPro" id="IPR012908">
    <property type="entry name" value="PGAP1-ab_dom-like"/>
</dbReference>
<dbReference type="InterPro" id="IPR039529">
    <property type="entry name" value="PGAP1/BST1"/>
</dbReference>
<dbReference type="InterPro" id="IPR056824">
    <property type="entry name" value="PGAP1_TMD"/>
</dbReference>
<dbReference type="PANTHER" id="PTHR15495:SF7">
    <property type="entry name" value="GPI INOSITOL-DEACYLASE"/>
    <property type="match status" value="1"/>
</dbReference>
<dbReference type="PANTHER" id="PTHR15495">
    <property type="entry name" value="NEGATIVE REGULATOR OF VESICLE FORMATION-RELATED"/>
    <property type="match status" value="1"/>
</dbReference>
<dbReference type="Pfam" id="PF07819">
    <property type="entry name" value="PGAP1"/>
    <property type="match status" value="1"/>
</dbReference>
<dbReference type="Pfam" id="PF25141">
    <property type="entry name" value="PGAP1_2nd"/>
    <property type="match status" value="1"/>
</dbReference>
<dbReference type="Pfam" id="PF25140">
    <property type="entry name" value="PGAP1_TMD"/>
    <property type="match status" value="1"/>
</dbReference>
<dbReference type="SUPFAM" id="SSF53474">
    <property type="entry name" value="alpha/beta-Hydrolases"/>
    <property type="match status" value="1"/>
</dbReference>
<dbReference type="PROSITE" id="PS00120">
    <property type="entry name" value="LIPASE_SER"/>
    <property type="match status" value="1"/>
</dbReference>
<name>BST1_EREGS</name>
<accession>Q752Q2</accession>
<proteinExistence type="inferred from homology"/>
<keyword id="KW-0256">Endoplasmic reticulum</keyword>
<keyword id="KW-0325">Glycoprotein</keyword>
<keyword id="KW-0378">Hydrolase</keyword>
<keyword id="KW-0472">Membrane</keyword>
<keyword id="KW-0653">Protein transport</keyword>
<keyword id="KW-1185">Reference proteome</keyword>
<keyword id="KW-0812">Transmembrane</keyword>
<keyword id="KW-1133">Transmembrane helix</keyword>
<keyword id="KW-0813">Transport</keyword>
<comment type="function">
    <text evidence="1">Involved in inositol deacylation of GPI-anchored proteins which plays important roles in the quality control and ER-associated degradation of GPI-anchored proteins.</text>
</comment>
<comment type="subcellular location">
    <subcellularLocation>
        <location evidence="1">Endoplasmic reticulum membrane</location>
        <topology evidence="1">Multi-pass membrane protein</topology>
    </subcellularLocation>
</comment>
<comment type="similarity">
    <text evidence="3">Belongs to the GPI inositol-deacylase family.</text>
</comment>
<organism>
    <name type="scientific">Eremothecium gossypii (strain ATCC 10895 / CBS 109.51 / FGSC 9923 / NRRL Y-1056)</name>
    <name type="common">Yeast</name>
    <name type="synonym">Ashbya gossypii</name>
    <dbReference type="NCBI Taxonomy" id="284811"/>
    <lineage>
        <taxon>Eukaryota</taxon>
        <taxon>Fungi</taxon>
        <taxon>Dikarya</taxon>
        <taxon>Ascomycota</taxon>
        <taxon>Saccharomycotina</taxon>
        <taxon>Saccharomycetes</taxon>
        <taxon>Saccharomycetales</taxon>
        <taxon>Saccharomycetaceae</taxon>
        <taxon>Eremothecium</taxon>
    </lineage>
</organism>
<evidence type="ECO:0000250" key="1"/>
<evidence type="ECO:0000255" key="2"/>
<evidence type="ECO:0000305" key="3"/>